<comment type="function">
    <text evidence="1">Succinyl-CoA synthetase functions in the citric acid cycle (TCA), coupling the hydrolysis of succinyl-CoA to the synthesis of either ATP or GTP and thus represents the only step of substrate-level phosphorylation in the TCA. The beta subunit provides nucleotide specificity of the enzyme and binds the substrate succinate, while the binding sites for coenzyme A and phosphate are found in the alpha subunit.</text>
</comment>
<comment type="catalytic activity">
    <reaction evidence="1">
        <text>succinate + ATP + CoA = succinyl-CoA + ADP + phosphate</text>
        <dbReference type="Rhea" id="RHEA:17661"/>
        <dbReference type="ChEBI" id="CHEBI:30031"/>
        <dbReference type="ChEBI" id="CHEBI:30616"/>
        <dbReference type="ChEBI" id="CHEBI:43474"/>
        <dbReference type="ChEBI" id="CHEBI:57287"/>
        <dbReference type="ChEBI" id="CHEBI:57292"/>
        <dbReference type="ChEBI" id="CHEBI:456216"/>
        <dbReference type="EC" id="6.2.1.5"/>
    </reaction>
    <physiologicalReaction direction="right-to-left" evidence="1">
        <dbReference type="Rhea" id="RHEA:17663"/>
    </physiologicalReaction>
</comment>
<comment type="catalytic activity">
    <reaction evidence="1">
        <text>GTP + succinate + CoA = succinyl-CoA + GDP + phosphate</text>
        <dbReference type="Rhea" id="RHEA:22120"/>
        <dbReference type="ChEBI" id="CHEBI:30031"/>
        <dbReference type="ChEBI" id="CHEBI:37565"/>
        <dbReference type="ChEBI" id="CHEBI:43474"/>
        <dbReference type="ChEBI" id="CHEBI:57287"/>
        <dbReference type="ChEBI" id="CHEBI:57292"/>
        <dbReference type="ChEBI" id="CHEBI:58189"/>
    </reaction>
    <physiologicalReaction direction="right-to-left" evidence="1">
        <dbReference type="Rhea" id="RHEA:22122"/>
    </physiologicalReaction>
</comment>
<comment type="cofactor">
    <cofactor evidence="1">
        <name>Mg(2+)</name>
        <dbReference type="ChEBI" id="CHEBI:18420"/>
    </cofactor>
    <text evidence="1">Binds 1 Mg(2+) ion per subunit.</text>
</comment>
<comment type="pathway">
    <text evidence="1">Carbohydrate metabolism; tricarboxylic acid cycle; succinate from succinyl-CoA (ligase route): step 1/1.</text>
</comment>
<comment type="subunit">
    <text evidence="1">Heterotetramer of two alpha and two beta subunits.</text>
</comment>
<comment type="similarity">
    <text evidence="1">Belongs to the succinate/malate CoA ligase beta subunit family.</text>
</comment>
<accession>A6WPA4</accession>
<dbReference type="EC" id="6.2.1.5" evidence="1"/>
<dbReference type="EMBL" id="CP000753">
    <property type="protein sequence ID" value="ABS08643.1"/>
    <property type="molecule type" value="Genomic_DNA"/>
</dbReference>
<dbReference type="RefSeq" id="WP_006081976.1">
    <property type="nucleotide sequence ID" value="NC_009665.1"/>
</dbReference>
<dbReference type="SMR" id="A6WPA4"/>
<dbReference type="GeneID" id="11772717"/>
<dbReference type="KEGG" id="sbm:Shew185_2506"/>
<dbReference type="HOGENOM" id="CLU_037430_0_2_6"/>
<dbReference type="UniPathway" id="UPA00223">
    <property type="reaction ID" value="UER00999"/>
</dbReference>
<dbReference type="GO" id="GO:0005829">
    <property type="term" value="C:cytosol"/>
    <property type="evidence" value="ECO:0007669"/>
    <property type="project" value="TreeGrafter"/>
</dbReference>
<dbReference type="GO" id="GO:0042709">
    <property type="term" value="C:succinate-CoA ligase complex"/>
    <property type="evidence" value="ECO:0007669"/>
    <property type="project" value="TreeGrafter"/>
</dbReference>
<dbReference type="GO" id="GO:0005524">
    <property type="term" value="F:ATP binding"/>
    <property type="evidence" value="ECO:0007669"/>
    <property type="project" value="UniProtKB-UniRule"/>
</dbReference>
<dbReference type="GO" id="GO:0000287">
    <property type="term" value="F:magnesium ion binding"/>
    <property type="evidence" value="ECO:0007669"/>
    <property type="project" value="UniProtKB-UniRule"/>
</dbReference>
<dbReference type="GO" id="GO:0004775">
    <property type="term" value="F:succinate-CoA ligase (ADP-forming) activity"/>
    <property type="evidence" value="ECO:0007669"/>
    <property type="project" value="UniProtKB-UniRule"/>
</dbReference>
<dbReference type="GO" id="GO:0004776">
    <property type="term" value="F:succinate-CoA ligase (GDP-forming) activity"/>
    <property type="evidence" value="ECO:0007669"/>
    <property type="project" value="RHEA"/>
</dbReference>
<dbReference type="GO" id="GO:0006104">
    <property type="term" value="P:succinyl-CoA metabolic process"/>
    <property type="evidence" value="ECO:0007669"/>
    <property type="project" value="TreeGrafter"/>
</dbReference>
<dbReference type="GO" id="GO:0006099">
    <property type="term" value="P:tricarboxylic acid cycle"/>
    <property type="evidence" value="ECO:0007669"/>
    <property type="project" value="UniProtKB-UniRule"/>
</dbReference>
<dbReference type="FunFam" id="3.30.1490.20:FF:000002">
    <property type="entry name" value="Succinate--CoA ligase [ADP-forming] subunit beta"/>
    <property type="match status" value="1"/>
</dbReference>
<dbReference type="FunFam" id="3.30.470.20:FF:000002">
    <property type="entry name" value="Succinate--CoA ligase [ADP-forming] subunit beta"/>
    <property type="match status" value="1"/>
</dbReference>
<dbReference type="FunFam" id="3.40.50.261:FF:000001">
    <property type="entry name" value="Succinate--CoA ligase [ADP-forming] subunit beta"/>
    <property type="match status" value="1"/>
</dbReference>
<dbReference type="Gene3D" id="3.30.1490.20">
    <property type="entry name" value="ATP-grasp fold, A domain"/>
    <property type="match status" value="1"/>
</dbReference>
<dbReference type="Gene3D" id="3.30.470.20">
    <property type="entry name" value="ATP-grasp fold, B domain"/>
    <property type="match status" value="1"/>
</dbReference>
<dbReference type="Gene3D" id="3.40.50.261">
    <property type="entry name" value="Succinyl-CoA synthetase domains"/>
    <property type="match status" value="1"/>
</dbReference>
<dbReference type="HAMAP" id="MF_00558">
    <property type="entry name" value="Succ_CoA_beta"/>
    <property type="match status" value="1"/>
</dbReference>
<dbReference type="InterPro" id="IPR011761">
    <property type="entry name" value="ATP-grasp"/>
</dbReference>
<dbReference type="InterPro" id="IPR013650">
    <property type="entry name" value="ATP-grasp_succ-CoA_synth-type"/>
</dbReference>
<dbReference type="InterPro" id="IPR013815">
    <property type="entry name" value="ATP_grasp_subdomain_1"/>
</dbReference>
<dbReference type="InterPro" id="IPR017866">
    <property type="entry name" value="Succ-CoA_synthase_bsu_CS"/>
</dbReference>
<dbReference type="InterPro" id="IPR005811">
    <property type="entry name" value="SUCC_ACL_C"/>
</dbReference>
<dbReference type="InterPro" id="IPR005809">
    <property type="entry name" value="Succ_CoA_ligase-like_bsu"/>
</dbReference>
<dbReference type="InterPro" id="IPR016102">
    <property type="entry name" value="Succinyl-CoA_synth-like"/>
</dbReference>
<dbReference type="NCBIfam" id="NF001913">
    <property type="entry name" value="PRK00696.1"/>
    <property type="match status" value="1"/>
</dbReference>
<dbReference type="NCBIfam" id="TIGR01016">
    <property type="entry name" value="sucCoAbeta"/>
    <property type="match status" value="1"/>
</dbReference>
<dbReference type="PANTHER" id="PTHR11815:SF10">
    <property type="entry name" value="SUCCINATE--COA LIGASE [GDP-FORMING] SUBUNIT BETA, MITOCHONDRIAL"/>
    <property type="match status" value="1"/>
</dbReference>
<dbReference type="PANTHER" id="PTHR11815">
    <property type="entry name" value="SUCCINYL-COA SYNTHETASE BETA CHAIN"/>
    <property type="match status" value="1"/>
</dbReference>
<dbReference type="Pfam" id="PF08442">
    <property type="entry name" value="ATP-grasp_2"/>
    <property type="match status" value="1"/>
</dbReference>
<dbReference type="Pfam" id="PF00549">
    <property type="entry name" value="Ligase_CoA"/>
    <property type="match status" value="1"/>
</dbReference>
<dbReference type="PIRSF" id="PIRSF001554">
    <property type="entry name" value="SucCS_beta"/>
    <property type="match status" value="1"/>
</dbReference>
<dbReference type="SUPFAM" id="SSF56059">
    <property type="entry name" value="Glutathione synthetase ATP-binding domain-like"/>
    <property type="match status" value="1"/>
</dbReference>
<dbReference type="SUPFAM" id="SSF52210">
    <property type="entry name" value="Succinyl-CoA synthetase domains"/>
    <property type="match status" value="1"/>
</dbReference>
<dbReference type="PROSITE" id="PS50975">
    <property type="entry name" value="ATP_GRASP"/>
    <property type="match status" value="1"/>
</dbReference>
<dbReference type="PROSITE" id="PS01217">
    <property type="entry name" value="SUCCINYL_COA_LIG_3"/>
    <property type="match status" value="1"/>
</dbReference>
<evidence type="ECO:0000255" key="1">
    <source>
        <dbReference type="HAMAP-Rule" id="MF_00558"/>
    </source>
</evidence>
<feature type="chain" id="PRO_1000082219" description="Succinate--CoA ligase [ADP-forming] subunit beta">
    <location>
        <begin position="1"/>
        <end position="388"/>
    </location>
</feature>
<feature type="domain" description="ATP-grasp" evidence="1">
    <location>
        <begin position="9"/>
        <end position="244"/>
    </location>
</feature>
<feature type="binding site" evidence="1">
    <location>
        <position position="46"/>
    </location>
    <ligand>
        <name>ATP</name>
        <dbReference type="ChEBI" id="CHEBI:30616"/>
    </ligand>
</feature>
<feature type="binding site" evidence="1">
    <location>
        <begin position="53"/>
        <end position="55"/>
    </location>
    <ligand>
        <name>ATP</name>
        <dbReference type="ChEBI" id="CHEBI:30616"/>
    </ligand>
</feature>
<feature type="binding site" evidence="1">
    <location>
        <position position="99"/>
    </location>
    <ligand>
        <name>ATP</name>
        <dbReference type="ChEBI" id="CHEBI:30616"/>
    </ligand>
</feature>
<feature type="binding site" evidence="1">
    <location>
        <position position="102"/>
    </location>
    <ligand>
        <name>ATP</name>
        <dbReference type="ChEBI" id="CHEBI:30616"/>
    </ligand>
</feature>
<feature type="binding site" evidence="1">
    <location>
        <position position="107"/>
    </location>
    <ligand>
        <name>ATP</name>
        <dbReference type="ChEBI" id="CHEBI:30616"/>
    </ligand>
</feature>
<feature type="binding site" evidence="1">
    <location>
        <position position="199"/>
    </location>
    <ligand>
        <name>Mg(2+)</name>
        <dbReference type="ChEBI" id="CHEBI:18420"/>
    </ligand>
</feature>
<feature type="binding site" evidence="1">
    <location>
        <position position="213"/>
    </location>
    <ligand>
        <name>Mg(2+)</name>
        <dbReference type="ChEBI" id="CHEBI:18420"/>
    </ligand>
</feature>
<feature type="binding site" evidence="1">
    <location>
        <position position="264"/>
    </location>
    <ligand>
        <name>substrate</name>
        <note>ligand shared with subunit alpha</note>
    </ligand>
</feature>
<feature type="binding site" evidence="1">
    <location>
        <begin position="321"/>
        <end position="323"/>
    </location>
    <ligand>
        <name>substrate</name>
        <note>ligand shared with subunit alpha</note>
    </ligand>
</feature>
<organism>
    <name type="scientific">Shewanella baltica (strain OS185)</name>
    <dbReference type="NCBI Taxonomy" id="402882"/>
    <lineage>
        <taxon>Bacteria</taxon>
        <taxon>Pseudomonadati</taxon>
        <taxon>Pseudomonadota</taxon>
        <taxon>Gammaproteobacteria</taxon>
        <taxon>Alteromonadales</taxon>
        <taxon>Shewanellaceae</taxon>
        <taxon>Shewanella</taxon>
    </lineage>
</organism>
<name>SUCC_SHEB8</name>
<protein>
    <recommendedName>
        <fullName evidence="1">Succinate--CoA ligase [ADP-forming] subunit beta</fullName>
        <ecNumber evidence="1">6.2.1.5</ecNumber>
    </recommendedName>
    <alternativeName>
        <fullName evidence="1">Succinyl-CoA synthetase subunit beta</fullName>
        <shortName evidence="1">SCS-beta</shortName>
    </alternativeName>
</protein>
<proteinExistence type="inferred from homology"/>
<sequence length="388" mass="41266">MNLHEYQAKSLFAEYGLPVSEGFACDTAQEAVEAAGHIGGNLWVVKCQVHAGGRGKAGGVKVTGDKEEIRAFAEHWLGKNLVTYQTDEKGQPVAKILVESCTDIANELYLGAVVDRATRRVVFMASTEGGVEIEKVAEETPELIHTAIIDPLTGPQGYQARDLGFKLGLNPTQMKQFTKIFMGLATMFVDHDFALLEINPLVITTEGNLHCLDGKIGIDGNALYRQPKIKGMHDPSQDDAREAHAAKFELNYVALDGNVGCMVNGAGLAMGTMDIVNLHGGKPANFLDVGGGATKERVAEAFKIILSDSNVKAVLVNIFGGIVRCDMIAEGIIGAVKEVGVKVPVVVRLEGTNAELGREVLAKSGLDIIAATSLTDAAEQVVKAAEGK</sequence>
<gene>
    <name evidence="1" type="primary">sucC</name>
    <name type="ordered locus">Shew185_2506</name>
</gene>
<keyword id="KW-0067">ATP-binding</keyword>
<keyword id="KW-0436">Ligase</keyword>
<keyword id="KW-0460">Magnesium</keyword>
<keyword id="KW-0479">Metal-binding</keyword>
<keyword id="KW-0547">Nucleotide-binding</keyword>
<keyword id="KW-0816">Tricarboxylic acid cycle</keyword>
<reference key="1">
    <citation type="submission" date="2007-07" db="EMBL/GenBank/DDBJ databases">
        <title>Complete sequence of chromosome of Shewanella baltica OS185.</title>
        <authorList>
            <consortium name="US DOE Joint Genome Institute"/>
            <person name="Copeland A."/>
            <person name="Lucas S."/>
            <person name="Lapidus A."/>
            <person name="Barry K."/>
            <person name="Glavina del Rio T."/>
            <person name="Dalin E."/>
            <person name="Tice H."/>
            <person name="Pitluck S."/>
            <person name="Sims D."/>
            <person name="Brettin T."/>
            <person name="Bruce D."/>
            <person name="Detter J.C."/>
            <person name="Han C."/>
            <person name="Schmutz J."/>
            <person name="Larimer F."/>
            <person name="Land M."/>
            <person name="Hauser L."/>
            <person name="Kyrpides N."/>
            <person name="Mikhailova N."/>
            <person name="Brettar I."/>
            <person name="Rodrigues J."/>
            <person name="Konstantinidis K."/>
            <person name="Tiedje J."/>
            <person name="Richardson P."/>
        </authorList>
    </citation>
    <scope>NUCLEOTIDE SEQUENCE [LARGE SCALE GENOMIC DNA]</scope>
    <source>
        <strain>OS185</strain>
    </source>
</reference>